<gene>
    <name evidence="4" type="primary">UGT708D1</name>
    <name type="ordered locus">Glyma09g29160</name>
</gene>
<dbReference type="EC" id="2.4.1.360" evidence="3"/>
<dbReference type="EMBL" id="LC003312">
    <property type="protein sequence ID" value="BAR73279.1"/>
    <property type="molecule type" value="mRNA"/>
</dbReference>
<dbReference type="EMBL" id="CM000842">
    <property type="protein sequence ID" value="KRH38854.1"/>
    <property type="molecule type" value="Genomic_DNA"/>
</dbReference>
<dbReference type="RefSeq" id="NP_001347241.1">
    <property type="nucleotide sequence ID" value="NM_001360312.1"/>
</dbReference>
<dbReference type="RefSeq" id="XP_003534077.1">
    <property type="nucleotide sequence ID" value="XM_003534029.3"/>
</dbReference>
<dbReference type="SMR" id="I1L3T1"/>
<dbReference type="STRING" id="3847.I1L3T1"/>
<dbReference type="PaxDb" id="3847-GLYMA09G29160.1"/>
<dbReference type="EnsemblPlants" id="KRH38854">
    <property type="protein sequence ID" value="KRH38854"/>
    <property type="gene ID" value="GLYMA_09G162400"/>
</dbReference>
<dbReference type="GeneID" id="100776116"/>
<dbReference type="Gramene" id="KRH38854">
    <property type="protein sequence ID" value="KRH38854"/>
    <property type="gene ID" value="GLYMA_09G162400"/>
</dbReference>
<dbReference type="eggNOG" id="KOG1192">
    <property type="taxonomic scope" value="Eukaryota"/>
</dbReference>
<dbReference type="HOGENOM" id="CLU_001724_3_1_1"/>
<dbReference type="InParanoid" id="I1L3T1"/>
<dbReference type="OMA" id="GAWAEHW"/>
<dbReference type="OrthoDB" id="5835829at2759"/>
<dbReference type="BRENDA" id="2.4.1.360">
    <property type="organism ID" value="2483"/>
</dbReference>
<dbReference type="Proteomes" id="UP000008827">
    <property type="component" value="Chromosome 9"/>
</dbReference>
<dbReference type="GO" id="GO:0120514">
    <property type="term" value="F:2-hydroxyflavanone C-glucosyltransferase activity"/>
    <property type="evidence" value="ECO:0007669"/>
    <property type="project" value="UniProtKB-EC"/>
</dbReference>
<dbReference type="GO" id="GO:0035251">
    <property type="term" value="F:UDP-glucosyltransferase activity"/>
    <property type="evidence" value="ECO:0000314"/>
    <property type="project" value="UniProtKB"/>
</dbReference>
<dbReference type="CDD" id="cd03784">
    <property type="entry name" value="GT1_Gtf-like"/>
    <property type="match status" value="1"/>
</dbReference>
<dbReference type="FunFam" id="3.40.50.2000:FF:000060">
    <property type="entry name" value="Glycosyltransferase"/>
    <property type="match status" value="1"/>
</dbReference>
<dbReference type="Gene3D" id="3.40.50.2000">
    <property type="entry name" value="Glycogen Phosphorylase B"/>
    <property type="match status" value="2"/>
</dbReference>
<dbReference type="InterPro" id="IPR050481">
    <property type="entry name" value="UDP-glycosyltransf_plant"/>
</dbReference>
<dbReference type="InterPro" id="IPR002213">
    <property type="entry name" value="UDP_glucos_trans"/>
</dbReference>
<dbReference type="PANTHER" id="PTHR48048">
    <property type="entry name" value="GLYCOSYLTRANSFERASE"/>
    <property type="match status" value="1"/>
</dbReference>
<dbReference type="PANTHER" id="PTHR48048:SF76">
    <property type="entry name" value="UDP-GLYCOSYLTRANSFERASE 708D1-LIKE"/>
    <property type="match status" value="1"/>
</dbReference>
<dbReference type="Pfam" id="PF00201">
    <property type="entry name" value="UDPGT"/>
    <property type="match status" value="1"/>
</dbReference>
<dbReference type="SUPFAM" id="SSF53756">
    <property type="entry name" value="UDP-Glycosyltransferase/glycogen phosphorylase"/>
    <property type="match status" value="1"/>
</dbReference>
<name>708D1_SOYBN</name>
<accession>I1L3T1</accession>
<protein>
    <recommendedName>
        <fullName evidence="4">UDP-glycosyltransferase 708D1</fullName>
        <ecNumber evidence="3">2.4.1.360</ecNumber>
    </recommendedName>
    <alternativeName>
        <fullName evidence="5">UDP-glucose:2-hydroxyflavanone C-glucosyltransferase</fullName>
    </alternativeName>
</protein>
<sequence length="480" mass="52515">MSSSEGVVHVAFLPSAGMGHLNPFLRLAATFIRYGCKVTLITPKPTVSLAESNLISRFCSSFPHQVTQLDLNLVSVDPTTVDTIDPFFLQFETIRRSLHLLPPILSLLSTPLSAFIYDITLITPLLSVIEKLSCPSYLYFTSSARMFSFFARVSVLSASNPGQTPSSFIGDDGVKIPGFTSPIPRSSVPPAILQASSNLFQRIMLEDSANVTKLNNGVFINSFEELEGEALAALNGGKVLEGLPPVYGVGPLMACEYEKGDEEGQKGCMSSIVKWLDEQSKGSVVYVSLGNRTETRREQIKDMALGLIECGYGFLWVVKLKRVDKEDEEGLEEVLGSELSSKVKEKGVVVKEFVDQVEILGHPSVGGFLSHGGWNSVTETVWKGVPCLSWPQHSDQKMSAEVIRMSGMGIWPEEWGWGTQDVVKGDEIAKRIKEMMSNESLRVKAGELKEAALKAAGVGGSCEVTIKRQIEEWKRNAQAN</sequence>
<reference key="1">
    <citation type="journal article" date="2015" name="FEBS Lett.">
        <title>Identification and functional analysis of 2-hydroxyflavanone C-glucosyltransferase in soybean (Glycine max).</title>
        <authorList>
            <person name="Hirade Y."/>
            <person name="Kotoku N."/>
            <person name="Terasaka K."/>
            <person name="Saijo-Hamano Y."/>
            <person name="Fukumoto A."/>
            <person name="Mizukami H."/>
        </authorList>
    </citation>
    <scope>NUCLEOTIDE SEQUENCE [MRNA]</scope>
    <scope>FUNCTION</scope>
    <scope>CATALYTIC ACTIVITY</scope>
    <scope>3D-STRUCTURE MODELING</scope>
    <scope>MUTAGENESIS OF HIS-20; ASP-85; ARG-202 AND ARG-292</scope>
</reference>
<reference key="2">
    <citation type="journal article" date="2010" name="Nature">
        <title>Genome sequence of the palaeopolyploid soybean.</title>
        <authorList>
            <person name="Schmutz J."/>
            <person name="Cannon S.B."/>
            <person name="Schlueter J."/>
            <person name="Ma J."/>
            <person name="Mitros T."/>
            <person name="Nelson W."/>
            <person name="Hyten D.L."/>
            <person name="Song Q."/>
            <person name="Thelen J.J."/>
            <person name="Cheng J."/>
            <person name="Xu D."/>
            <person name="Hellsten U."/>
            <person name="May G.D."/>
            <person name="Yu Y."/>
            <person name="Sakurai T."/>
            <person name="Umezawa T."/>
            <person name="Bhattacharyya M.K."/>
            <person name="Sandhu D."/>
            <person name="Valliyodan B."/>
            <person name="Lindquist E."/>
            <person name="Peto M."/>
            <person name="Grant D."/>
            <person name="Shu S."/>
            <person name="Goodstein D."/>
            <person name="Barry K."/>
            <person name="Futrell-Griggs M."/>
            <person name="Abernathy B."/>
            <person name="Du J."/>
            <person name="Tian Z."/>
            <person name="Zhu L."/>
            <person name="Gill N."/>
            <person name="Joshi T."/>
            <person name="Libault M."/>
            <person name="Sethuraman A."/>
            <person name="Zhang X.-C."/>
            <person name="Shinozaki K."/>
            <person name="Nguyen H.T."/>
            <person name="Wing R.A."/>
            <person name="Cregan P."/>
            <person name="Specht J."/>
            <person name="Grimwood J."/>
            <person name="Rokhsar D."/>
            <person name="Stacey G."/>
            <person name="Shoemaker R.C."/>
            <person name="Jackson S.A."/>
        </authorList>
    </citation>
    <scope>NUCLEOTIDE SEQUENCE [LARGE SCALE GENOMIC DNA]</scope>
    <source>
        <strain>cv. Williams 82</strain>
    </source>
</reference>
<reference key="3">
    <citation type="journal article" date="2008" name="DNA Res.">
        <title>Sequencing and analysis of approximately 40,000 soybean cDNA clones from a full-length-enriched cDNA library.</title>
        <authorList>
            <person name="Umezawa T."/>
            <person name="Sakurai T."/>
            <person name="Totoki Y."/>
            <person name="Toyoda A."/>
            <person name="Seki M."/>
            <person name="Ishiwata A."/>
            <person name="Akiyama K."/>
            <person name="Kurotani A."/>
            <person name="Yoshida T."/>
            <person name="Mochida K."/>
            <person name="Kasuga M."/>
            <person name="Todaka D."/>
            <person name="Maruyama K."/>
            <person name="Nakashima K."/>
            <person name="Enju A."/>
            <person name="Mizukado S."/>
            <person name="Ahmed S."/>
            <person name="Yoshiwara K."/>
            <person name="Harada K."/>
            <person name="Tsubokura Y."/>
            <person name="Hayashi M."/>
            <person name="Sato S."/>
            <person name="Anai T."/>
            <person name="Ishimoto M."/>
            <person name="Funatsuki H."/>
            <person name="Teraishi M."/>
            <person name="Osaki M."/>
            <person name="Shinano T."/>
            <person name="Akashi R."/>
            <person name="Sakaki Y."/>
            <person name="Yamaguchi-Shinozaki K."/>
            <person name="Shinozaki K."/>
        </authorList>
    </citation>
    <scope>NUCLEOTIDE SEQUENCE [LARGE SCALE MRNA]</scope>
</reference>
<feature type="chain" id="PRO_0000435365" description="UDP-glycosyltransferase 708D1">
    <location>
        <begin position="1"/>
        <end position="480"/>
    </location>
</feature>
<feature type="region of interest" description="UDP" evidence="1">
    <location>
        <begin position="291"/>
        <end position="292"/>
    </location>
</feature>
<feature type="active site" description="Proton acceptor" evidence="1">
    <location>
        <position position="20"/>
    </location>
</feature>
<feature type="active site" description="Charge relay" evidence="1">
    <location>
        <position position="118"/>
    </location>
</feature>
<feature type="binding site" evidence="2">
    <location>
        <position position="20"/>
    </location>
    <ligand>
        <name>an anthocyanidin</name>
        <dbReference type="ChEBI" id="CHEBI:143576"/>
    </ligand>
</feature>
<feature type="binding site" evidence="1">
    <location>
        <position position="141"/>
    </location>
    <ligand>
        <name>UDP-alpha-D-glucose</name>
        <dbReference type="ChEBI" id="CHEBI:58885"/>
    </ligand>
</feature>
<feature type="binding site" evidence="1">
    <location>
        <position position="354"/>
    </location>
    <ligand>
        <name>UDP-alpha-D-glucose</name>
        <dbReference type="ChEBI" id="CHEBI:58885"/>
    </ligand>
</feature>
<feature type="binding site" evidence="1">
    <location>
        <position position="356"/>
    </location>
    <ligand>
        <name>UDP-alpha-D-glucose</name>
        <dbReference type="ChEBI" id="CHEBI:58885"/>
    </ligand>
</feature>
<feature type="binding site" evidence="1">
    <location>
        <position position="371"/>
    </location>
    <ligand>
        <name>UDP-alpha-D-glucose</name>
        <dbReference type="ChEBI" id="CHEBI:58885"/>
    </ligand>
</feature>
<feature type="binding site" evidence="1">
    <location>
        <position position="374"/>
    </location>
    <ligand>
        <name>UDP-alpha-D-glucose</name>
        <dbReference type="ChEBI" id="CHEBI:58885"/>
    </ligand>
</feature>
<feature type="binding site" evidence="1">
    <location>
        <position position="375"/>
    </location>
    <ligand>
        <name>UDP-alpha-D-glucose</name>
        <dbReference type="ChEBI" id="CHEBI:58885"/>
    </ligand>
</feature>
<feature type="binding site" evidence="1">
    <location>
        <position position="376"/>
    </location>
    <ligand>
        <name>UDP-alpha-D-glucose</name>
        <dbReference type="ChEBI" id="CHEBI:58885"/>
    </ligand>
</feature>
<feature type="binding site" evidence="1">
    <location>
        <position position="379"/>
    </location>
    <ligand>
        <name>UDP-alpha-D-glucose</name>
        <dbReference type="ChEBI" id="CHEBI:58885"/>
    </ligand>
</feature>
<feature type="binding site" evidence="1">
    <location>
        <position position="395"/>
    </location>
    <ligand>
        <name>UDP-alpha-D-glucose</name>
        <dbReference type="ChEBI" id="CHEBI:58885"/>
    </ligand>
</feature>
<feature type="binding site" evidence="1">
    <location>
        <position position="396"/>
    </location>
    <ligand>
        <name>UDP-alpha-D-glucose</name>
        <dbReference type="ChEBI" id="CHEBI:58885"/>
    </ligand>
</feature>
<feature type="mutagenesis site" description="Loss of C-glucosyltransferase activity, but acquisition of O-glucosyltransferase activity." evidence="3">
    <original>H</original>
    <variation>A</variation>
    <location>
        <position position="20"/>
    </location>
</feature>
<feature type="mutagenesis site" description="Loss of catalytic activity." evidence="3">
    <original>D</original>
    <variation>A</variation>
    <location>
        <position position="85"/>
    </location>
</feature>
<feature type="mutagenesis site" description="No effect on catalytic activity." evidence="3">
    <original>R</original>
    <variation>A</variation>
    <location>
        <position position="202"/>
    </location>
</feature>
<feature type="mutagenesis site" description="Loss of catalytic activity." evidence="3">
    <original>R</original>
    <variation>A</variation>
    <location>
        <position position="292"/>
    </location>
</feature>
<organism>
    <name type="scientific">Glycine max</name>
    <name type="common">Soybean</name>
    <name type="synonym">Glycine hispida</name>
    <dbReference type="NCBI Taxonomy" id="3847"/>
    <lineage>
        <taxon>Eukaryota</taxon>
        <taxon>Viridiplantae</taxon>
        <taxon>Streptophyta</taxon>
        <taxon>Embryophyta</taxon>
        <taxon>Tracheophyta</taxon>
        <taxon>Spermatophyta</taxon>
        <taxon>Magnoliopsida</taxon>
        <taxon>eudicotyledons</taxon>
        <taxon>Gunneridae</taxon>
        <taxon>Pentapetalae</taxon>
        <taxon>rosids</taxon>
        <taxon>fabids</taxon>
        <taxon>Fabales</taxon>
        <taxon>Fabaceae</taxon>
        <taxon>Papilionoideae</taxon>
        <taxon>50 kb inversion clade</taxon>
        <taxon>NPAAA clade</taxon>
        <taxon>indigoferoid/millettioid clade</taxon>
        <taxon>Phaseoleae</taxon>
        <taxon>Glycine</taxon>
        <taxon>Glycine subgen. Soja</taxon>
    </lineage>
</organism>
<comment type="function">
    <text evidence="3">UDP-glucose-dependent glucosyltransferase catalyzing the c-glucosylation of the A ring of 2-hydroxynaringenin. Also active toward phloretin, but not toward naringenin and apigenin.</text>
</comment>
<comment type="catalytic activity">
    <reaction evidence="3">
        <text>a 3'-hydro-2'-hydroxy-beta-oxodihydrochalcone + UDP-alpha-D-glucose = a 3'-(beta-D-glucopyranosyl)-2'-hydroxy-beta-oxodihydrochalcone + UDP + H(+)</text>
        <dbReference type="Rhea" id="RHEA:51504"/>
        <dbReference type="ChEBI" id="CHEBI:15378"/>
        <dbReference type="ChEBI" id="CHEBI:58223"/>
        <dbReference type="ChEBI" id="CHEBI:58885"/>
        <dbReference type="ChEBI" id="CHEBI:142482"/>
        <dbReference type="ChEBI" id="CHEBI:142483"/>
        <dbReference type="EC" id="2.4.1.360"/>
    </reaction>
    <physiologicalReaction direction="left-to-right" evidence="3">
        <dbReference type="Rhea" id="RHEA:51505"/>
    </physiologicalReaction>
</comment>
<comment type="similarity">
    <text evidence="5">Belongs to the UDP-glycosyltransferase family.</text>
</comment>
<evidence type="ECO:0000250" key="1">
    <source>
        <dbReference type="UniProtKB" id="A0A0A1HA03"/>
    </source>
</evidence>
<evidence type="ECO:0000250" key="2">
    <source>
        <dbReference type="UniProtKB" id="P51094"/>
    </source>
</evidence>
<evidence type="ECO:0000269" key="3">
    <source>
    </source>
</evidence>
<evidence type="ECO:0000303" key="4">
    <source>
    </source>
</evidence>
<evidence type="ECO:0000305" key="5"/>
<keyword id="KW-0328">Glycosyltransferase</keyword>
<keyword id="KW-1185">Reference proteome</keyword>
<keyword id="KW-0808">Transferase</keyword>
<proteinExistence type="evidence at protein level"/>